<gene>
    <name evidence="1" type="primary">murA</name>
    <name type="ordered locus">Asuc_0792</name>
</gene>
<evidence type="ECO:0000255" key="1">
    <source>
        <dbReference type="HAMAP-Rule" id="MF_00111"/>
    </source>
</evidence>
<organism>
    <name type="scientific">Actinobacillus succinogenes (strain ATCC 55618 / DSM 22257 / CCUG 43843 / 130Z)</name>
    <dbReference type="NCBI Taxonomy" id="339671"/>
    <lineage>
        <taxon>Bacteria</taxon>
        <taxon>Pseudomonadati</taxon>
        <taxon>Pseudomonadota</taxon>
        <taxon>Gammaproteobacteria</taxon>
        <taxon>Pasteurellales</taxon>
        <taxon>Pasteurellaceae</taxon>
        <taxon>Actinobacillus</taxon>
    </lineage>
</organism>
<name>MURA_ACTSZ</name>
<dbReference type="EC" id="2.5.1.7" evidence="1"/>
<dbReference type="EMBL" id="CP000746">
    <property type="protein sequence ID" value="ABR74162.1"/>
    <property type="molecule type" value="Genomic_DNA"/>
</dbReference>
<dbReference type="RefSeq" id="WP_012072540.1">
    <property type="nucleotide sequence ID" value="NC_009655.1"/>
</dbReference>
<dbReference type="SMR" id="A6VMG5"/>
<dbReference type="STRING" id="339671.Asuc_0792"/>
<dbReference type="KEGG" id="asu:Asuc_0792"/>
<dbReference type="eggNOG" id="COG0766">
    <property type="taxonomic scope" value="Bacteria"/>
</dbReference>
<dbReference type="HOGENOM" id="CLU_027387_0_0_6"/>
<dbReference type="OrthoDB" id="9803760at2"/>
<dbReference type="UniPathway" id="UPA00219"/>
<dbReference type="Proteomes" id="UP000001114">
    <property type="component" value="Chromosome"/>
</dbReference>
<dbReference type="GO" id="GO:0005737">
    <property type="term" value="C:cytoplasm"/>
    <property type="evidence" value="ECO:0007669"/>
    <property type="project" value="UniProtKB-SubCell"/>
</dbReference>
<dbReference type="GO" id="GO:0008760">
    <property type="term" value="F:UDP-N-acetylglucosamine 1-carboxyvinyltransferase activity"/>
    <property type="evidence" value="ECO:0007669"/>
    <property type="project" value="UniProtKB-UniRule"/>
</dbReference>
<dbReference type="GO" id="GO:0051301">
    <property type="term" value="P:cell division"/>
    <property type="evidence" value="ECO:0007669"/>
    <property type="project" value="UniProtKB-KW"/>
</dbReference>
<dbReference type="GO" id="GO:0071555">
    <property type="term" value="P:cell wall organization"/>
    <property type="evidence" value="ECO:0007669"/>
    <property type="project" value="UniProtKB-KW"/>
</dbReference>
<dbReference type="GO" id="GO:0009252">
    <property type="term" value="P:peptidoglycan biosynthetic process"/>
    <property type="evidence" value="ECO:0007669"/>
    <property type="project" value="UniProtKB-UniRule"/>
</dbReference>
<dbReference type="GO" id="GO:0008360">
    <property type="term" value="P:regulation of cell shape"/>
    <property type="evidence" value="ECO:0007669"/>
    <property type="project" value="UniProtKB-KW"/>
</dbReference>
<dbReference type="GO" id="GO:0019277">
    <property type="term" value="P:UDP-N-acetylgalactosamine biosynthetic process"/>
    <property type="evidence" value="ECO:0007669"/>
    <property type="project" value="InterPro"/>
</dbReference>
<dbReference type="CDD" id="cd01555">
    <property type="entry name" value="UdpNAET"/>
    <property type="match status" value="1"/>
</dbReference>
<dbReference type="FunFam" id="3.65.10.10:FF:000002">
    <property type="entry name" value="UDP-N-acetylglucosamine 1-carboxyvinyltransferase"/>
    <property type="match status" value="1"/>
</dbReference>
<dbReference type="Gene3D" id="3.65.10.10">
    <property type="entry name" value="Enolpyruvate transferase domain"/>
    <property type="match status" value="2"/>
</dbReference>
<dbReference type="HAMAP" id="MF_00111">
    <property type="entry name" value="MurA"/>
    <property type="match status" value="1"/>
</dbReference>
<dbReference type="InterPro" id="IPR001986">
    <property type="entry name" value="Enolpyruvate_Tfrase_dom"/>
</dbReference>
<dbReference type="InterPro" id="IPR036968">
    <property type="entry name" value="Enolpyruvate_Tfrase_sf"/>
</dbReference>
<dbReference type="InterPro" id="IPR050068">
    <property type="entry name" value="MurA_subfamily"/>
</dbReference>
<dbReference type="InterPro" id="IPR013792">
    <property type="entry name" value="RNA3'P_cycl/enolpyr_Trfase_a/b"/>
</dbReference>
<dbReference type="InterPro" id="IPR005750">
    <property type="entry name" value="UDP_GlcNAc_COvinyl_MurA"/>
</dbReference>
<dbReference type="NCBIfam" id="TIGR01072">
    <property type="entry name" value="murA"/>
    <property type="match status" value="1"/>
</dbReference>
<dbReference type="NCBIfam" id="NF006873">
    <property type="entry name" value="PRK09369.1"/>
    <property type="match status" value="1"/>
</dbReference>
<dbReference type="PANTHER" id="PTHR43783">
    <property type="entry name" value="UDP-N-ACETYLGLUCOSAMINE 1-CARBOXYVINYLTRANSFERASE"/>
    <property type="match status" value="1"/>
</dbReference>
<dbReference type="PANTHER" id="PTHR43783:SF1">
    <property type="entry name" value="UDP-N-ACETYLGLUCOSAMINE 1-CARBOXYVINYLTRANSFERASE"/>
    <property type="match status" value="1"/>
</dbReference>
<dbReference type="Pfam" id="PF00275">
    <property type="entry name" value="EPSP_synthase"/>
    <property type="match status" value="1"/>
</dbReference>
<dbReference type="SUPFAM" id="SSF55205">
    <property type="entry name" value="EPT/RTPC-like"/>
    <property type="match status" value="1"/>
</dbReference>
<feature type="chain" id="PRO_1000071327" description="UDP-N-acetylglucosamine 1-carboxyvinyltransferase">
    <location>
        <begin position="1"/>
        <end position="420"/>
    </location>
</feature>
<feature type="active site" description="Proton donor" evidence="1">
    <location>
        <position position="117"/>
    </location>
</feature>
<feature type="binding site" evidence="1">
    <location>
        <begin position="22"/>
        <end position="23"/>
    </location>
    <ligand>
        <name>phosphoenolpyruvate</name>
        <dbReference type="ChEBI" id="CHEBI:58702"/>
    </ligand>
</feature>
<feature type="binding site" evidence="1">
    <location>
        <position position="93"/>
    </location>
    <ligand>
        <name>UDP-N-acetyl-alpha-D-glucosamine</name>
        <dbReference type="ChEBI" id="CHEBI:57705"/>
    </ligand>
</feature>
<feature type="binding site" evidence="1">
    <location>
        <begin position="162"/>
        <end position="165"/>
    </location>
    <ligand>
        <name>UDP-N-acetyl-alpha-D-glucosamine</name>
        <dbReference type="ChEBI" id="CHEBI:57705"/>
    </ligand>
</feature>
<feature type="binding site" evidence="1">
    <location>
        <position position="307"/>
    </location>
    <ligand>
        <name>UDP-N-acetyl-alpha-D-glucosamine</name>
        <dbReference type="ChEBI" id="CHEBI:57705"/>
    </ligand>
</feature>
<feature type="binding site" evidence="1">
    <location>
        <position position="329"/>
    </location>
    <ligand>
        <name>UDP-N-acetyl-alpha-D-glucosamine</name>
        <dbReference type="ChEBI" id="CHEBI:57705"/>
    </ligand>
</feature>
<feature type="modified residue" description="2-(S-cysteinyl)pyruvic acid O-phosphothioketal" evidence="1">
    <location>
        <position position="117"/>
    </location>
</feature>
<comment type="function">
    <text evidence="1">Cell wall formation. Adds enolpyruvyl to UDP-N-acetylglucosamine.</text>
</comment>
<comment type="catalytic activity">
    <reaction evidence="1">
        <text>phosphoenolpyruvate + UDP-N-acetyl-alpha-D-glucosamine = UDP-N-acetyl-3-O-(1-carboxyvinyl)-alpha-D-glucosamine + phosphate</text>
        <dbReference type="Rhea" id="RHEA:18681"/>
        <dbReference type="ChEBI" id="CHEBI:43474"/>
        <dbReference type="ChEBI" id="CHEBI:57705"/>
        <dbReference type="ChEBI" id="CHEBI:58702"/>
        <dbReference type="ChEBI" id="CHEBI:68483"/>
        <dbReference type="EC" id="2.5.1.7"/>
    </reaction>
</comment>
<comment type="pathway">
    <text evidence="1">Cell wall biogenesis; peptidoglycan biosynthesis.</text>
</comment>
<comment type="subcellular location">
    <subcellularLocation>
        <location evidence="1">Cytoplasm</location>
    </subcellularLocation>
</comment>
<comment type="similarity">
    <text evidence="1">Belongs to the EPSP synthase family. MurA subfamily.</text>
</comment>
<accession>A6VMG5</accession>
<proteinExistence type="inferred from homology"/>
<reference key="1">
    <citation type="journal article" date="2010" name="BMC Genomics">
        <title>A genomic perspective on the potential of Actinobacillus succinogenes for industrial succinate production.</title>
        <authorList>
            <person name="McKinlay J.B."/>
            <person name="Laivenieks M."/>
            <person name="Schindler B.D."/>
            <person name="McKinlay A.A."/>
            <person name="Siddaramappa S."/>
            <person name="Challacombe J.F."/>
            <person name="Lowry S.R."/>
            <person name="Clum A."/>
            <person name="Lapidus A.L."/>
            <person name="Burkhart K.B."/>
            <person name="Harkins V."/>
            <person name="Vieille C."/>
        </authorList>
    </citation>
    <scope>NUCLEOTIDE SEQUENCE [LARGE SCALE GENOMIC DNA]</scope>
    <source>
        <strain>ATCC 55618 / DSM 22257 / CCUG 43843 / 130Z</strain>
    </source>
</reference>
<protein>
    <recommendedName>
        <fullName evidence="1">UDP-N-acetylglucosamine 1-carboxyvinyltransferase</fullName>
        <ecNumber evidence="1">2.5.1.7</ecNumber>
    </recommendedName>
    <alternativeName>
        <fullName evidence="1">Enoylpyruvate transferase</fullName>
    </alternativeName>
    <alternativeName>
        <fullName evidence="1">UDP-N-acetylglucosamine enolpyruvyl transferase</fullName>
        <shortName evidence="1">EPT</shortName>
    </alternativeName>
</protein>
<sequence>MEKFRVYGQSTLSGDVQISGAKNAALPILFATILAEEPVKLTNVPELKDVDTTFEILRKLGVVVERTDEQTVLIDASRIDRYVAPYELVKTMRASIWALAPLLTRFREGQVSLPGGCTIGARPVDMHISGLEKMGAAIELDEGYVKATVNGRLTGTRIYMDKVSVGATLSLIMAATLAEGVTTIENAAREPEIVDTADFLNKMGAKISGAGTDTISIEGVSRLAGCEHSIVPDRIETGTFLIAAAISGGRITCHNTKADTLDAVIEKLREAGMQVDVTENTITLDSLGQRPKAVNIRTMPHPGFPTDMQAQFTLLNVVAEGTSKITETIFENRFMHVPELIRMGAKGEIEGNTAIIHGVESLSGAQVMATDLRASISLVLAGCIASGETVVDRIYHIDRGYEHIEDKLRGLGARIERFSE</sequence>
<keyword id="KW-0131">Cell cycle</keyword>
<keyword id="KW-0132">Cell division</keyword>
<keyword id="KW-0133">Cell shape</keyword>
<keyword id="KW-0961">Cell wall biogenesis/degradation</keyword>
<keyword id="KW-0963">Cytoplasm</keyword>
<keyword id="KW-0573">Peptidoglycan synthesis</keyword>
<keyword id="KW-0670">Pyruvate</keyword>
<keyword id="KW-1185">Reference proteome</keyword>
<keyword id="KW-0808">Transferase</keyword>